<comment type="function">
    <text evidence="1">Possesses two activities: a DNA synthesis (polymerase) and an exonucleolytic activity that degrades single-stranded DNA in the 3'- to 5'-direction. Has a template-primer preference which is characteristic of a replicative DNA polymerase (By similarity).</text>
</comment>
<comment type="catalytic activity">
    <reaction evidence="3">
        <text>DNA(n) + a 2'-deoxyribonucleoside 5'-triphosphate = DNA(n+1) + diphosphate</text>
        <dbReference type="Rhea" id="RHEA:22508"/>
        <dbReference type="Rhea" id="RHEA-COMP:17339"/>
        <dbReference type="Rhea" id="RHEA-COMP:17340"/>
        <dbReference type="ChEBI" id="CHEBI:33019"/>
        <dbReference type="ChEBI" id="CHEBI:61560"/>
        <dbReference type="ChEBI" id="CHEBI:173112"/>
        <dbReference type="EC" id="2.7.7.7"/>
    </reaction>
</comment>
<comment type="catalytic activity">
    <reaction evidence="3">
        <text>Exonucleolytic cleavage in the 3'- to 5'-direction to yield nucleoside 5'-phosphates.</text>
        <dbReference type="EC" id="3.1.11.1"/>
    </reaction>
</comment>
<comment type="subunit">
    <text evidence="3">Heterodimer of a large subunit and a small subunit.</text>
</comment>
<comment type="PTM">
    <text evidence="5">This protein undergoes a protein self splicing that involves a post-translational excision of the intervening region (intein) followed by peptide ligation.</text>
</comment>
<comment type="similarity">
    <text evidence="3">Belongs to the archaeal DNA polymerase II family.</text>
</comment>
<keyword id="KW-0068">Autocatalytic cleavage</keyword>
<keyword id="KW-0235">DNA replication</keyword>
<keyword id="KW-0238">DNA-binding</keyword>
<keyword id="KW-0239">DNA-directed DNA polymerase</keyword>
<keyword id="KW-0269">Exonuclease</keyword>
<keyword id="KW-0378">Hydrolase</keyword>
<keyword id="KW-0511">Multifunctional enzyme</keyword>
<keyword id="KW-0540">Nuclease</keyword>
<keyword id="KW-0548">Nucleotidyltransferase</keyword>
<keyword id="KW-0651">Protein splicing</keyword>
<keyword id="KW-1185">Reference proteome</keyword>
<keyword id="KW-0808">Transferase</keyword>
<feature type="chain" id="PRO_0000294677" description="DNA polymerase II large subunit, 1st part" evidence="2">
    <location>
        <begin position="1"/>
        <end position="965"/>
    </location>
</feature>
<feature type="chain" id="PRO_0000294678" description="Hma polC intein" evidence="2">
    <location>
        <begin position="966"/>
        <end position="1145"/>
    </location>
</feature>
<feature type="chain" id="PRO_0000294679" description="DNA polymerase II large subunit, 2nd part" evidence="2">
    <location>
        <begin position="1146"/>
        <end position="1395"/>
    </location>
</feature>
<feature type="region of interest" description="Disordered" evidence="4">
    <location>
        <begin position="279"/>
        <end position="320"/>
    </location>
</feature>
<feature type="region of interest" description="Disordered" evidence="4">
    <location>
        <begin position="657"/>
        <end position="704"/>
    </location>
</feature>
<feature type="compositionally biased region" description="Acidic residues" evidence="4">
    <location>
        <begin position="283"/>
        <end position="312"/>
    </location>
</feature>
<feature type="compositionally biased region" description="Basic and acidic residues" evidence="4">
    <location>
        <begin position="661"/>
        <end position="671"/>
    </location>
</feature>
<feature type="compositionally biased region" description="Basic and acidic residues" evidence="4">
    <location>
        <begin position="690"/>
        <end position="700"/>
    </location>
</feature>
<dbReference type="EC" id="2.7.7.7" evidence="3"/>
<dbReference type="EC" id="3.1.11.1" evidence="3"/>
<dbReference type="EMBL" id="AY596297">
    <property type="protein sequence ID" value="AAV47463.1"/>
    <property type="molecule type" value="Genomic_DNA"/>
</dbReference>
<dbReference type="RefSeq" id="WP_011224375.1">
    <property type="nucleotide sequence ID" value="NC_006396.1"/>
</dbReference>
<dbReference type="SMR" id="Q5UZ40"/>
<dbReference type="STRING" id="272569.rrnAC2691"/>
<dbReference type="MEROPS" id="N10.006"/>
<dbReference type="PaxDb" id="272569-rrnAC2691"/>
<dbReference type="EnsemblBacteria" id="AAV47463">
    <property type="protein sequence ID" value="AAV47463"/>
    <property type="gene ID" value="rrnAC2691"/>
</dbReference>
<dbReference type="GeneID" id="40153559"/>
<dbReference type="KEGG" id="hma:rrnAC2691"/>
<dbReference type="PATRIC" id="fig|272569.17.peg.3278"/>
<dbReference type="eggNOG" id="arCOG04447">
    <property type="taxonomic scope" value="Archaea"/>
</dbReference>
<dbReference type="HOGENOM" id="CLU_001154_0_0_2"/>
<dbReference type="Proteomes" id="UP000001169">
    <property type="component" value="Chromosome I"/>
</dbReference>
<dbReference type="GO" id="GO:0003677">
    <property type="term" value="F:DNA binding"/>
    <property type="evidence" value="ECO:0007669"/>
    <property type="project" value="UniProtKB-UniRule"/>
</dbReference>
<dbReference type="GO" id="GO:0003887">
    <property type="term" value="F:DNA-directed DNA polymerase activity"/>
    <property type="evidence" value="ECO:0007669"/>
    <property type="project" value="UniProtKB-UniRule"/>
</dbReference>
<dbReference type="GO" id="GO:0008310">
    <property type="term" value="F:single-stranded DNA 3'-5' DNA exonuclease activity"/>
    <property type="evidence" value="ECO:0007669"/>
    <property type="project" value="UniProtKB-EC"/>
</dbReference>
<dbReference type="GO" id="GO:0006308">
    <property type="term" value="P:DNA catabolic process"/>
    <property type="evidence" value="ECO:0007669"/>
    <property type="project" value="UniProtKB-UniRule"/>
</dbReference>
<dbReference type="GO" id="GO:0006261">
    <property type="term" value="P:DNA-templated DNA replication"/>
    <property type="evidence" value="ECO:0007669"/>
    <property type="project" value="UniProtKB-UniRule"/>
</dbReference>
<dbReference type="GO" id="GO:0016539">
    <property type="term" value="P:intein-mediated protein splicing"/>
    <property type="evidence" value="ECO:0007669"/>
    <property type="project" value="InterPro"/>
</dbReference>
<dbReference type="CDD" id="cd00081">
    <property type="entry name" value="Hint"/>
    <property type="match status" value="1"/>
</dbReference>
<dbReference type="Gene3D" id="2.170.16.10">
    <property type="entry name" value="Hedgehog/Intein (Hint) domain"/>
    <property type="match status" value="1"/>
</dbReference>
<dbReference type="HAMAP" id="MF_00324">
    <property type="entry name" value="DNApol_II_L_arch"/>
    <property type="match status" value="1"/>
</dbReference>
<dbReference type="InterPro" id="IPR036844">
    <property type="entry name" value="Hint_dom_sf"/>
</dbReference>
<dbReference type="InterPro" id="IPR006141">
    <property type="entry name" value="Intein_N"/>
</dbReference>
<dbReference type="InterPro" id="IPR004475">
    <property type="entry name" value="PolC_DP2"/>
</dbReference>
<dbReference type="InterPro" id="IPR056172">
    <property type="entry name" value="PolC_DP2_cat_dom"/>
</dbReference>
<dbReference type="InterPro" id="IPR056171">
    <property type="entry name" value="PolC_DP2_central_dom"/>
</dbReference>
<dbReference type="InterPro" id="IPR016033">
    <property type="entry name" value="PolC_DP2_N"/>
</dbReference>
<dbReference type="NCBIfam" id="TIGR01445">
    <property type="entry name" value="intein_Nterm"/>
    <property type="match status" value="1"/>
</dbReference>
<dbReference type="NCBIfam" id="TIGR00354">
    <property type="entry name" value="polC"/>
    <property type="match status" value="1"/>
</dbReference>
<dbReference type="NCBIfam" id="NF003103">
    <property type="entry name" value="PRK04023.1"/>
    <property type="match status" value="1"/>
</dbReference>
<dbReference type="NCBIfam" id="NF011302">
    <property type="entry name" value="PRK14714.1"/>
    <property type="match status" value="1"/>
</dbReference>
<dbReference type="PANTHER" id="PTHR42210">
    <property type="entry name" value="DNA POLYMERASE II LARGE SUBUNIT"/>
    <property type="match status" value="1"/>
</dbReference>
<dbReference type="PANTHER" id="PTHR42210:SF1">
    <property type="entry name" value="DNA POLYMERASE II LARGE SUBUNIT"/>
    <property type="match status" value="1"/>
</dbReference>
<dbReference type="Pfam" id="PF24846">
    <property type="entry name" value="PolC_DP2_cat"/>
    <property type="match status" value="2"/>
</dbReference>
<dbReference type="Pfam" id="PF24844">
    <property type="entry name" value="PolC_DP2_central"/>
    <property type="match status" value="1"/>
</dbReference>
<dbReference type="Pfam" id="PF03833">
    <property type="entry name" value="PolC_DP2_N"/>
    <property type="match status" value="1"/>
</dbReference>
<dbReference type="SUPFAM" id="SSF51294">
    <property type="entry name" value="Hedgehog/intein (Hint) domain"/>
    <property type="match status" value="1"/>
</dbReference>
<dbReference type="PROSITE" id="PS50817">
    <property type="entry name" value="INTEIN_N_TER"/>
    <property type="match status" value="1"/>
</dbReference>
<evidence type="ECO:0000250" key="1"/>
<evidence type="ECO:0000255" key="2"/>
<evidence type="ECO:0000255" key="3">
    <source>
        <dbReference type="HAMAP-Rule" id="MF_00324"/>
    </source>
</evidence>
<evidence type="ECO:0000256" key="4">
    <source>
        <dbReference type="SAM" id="MobiDB-lite"/>
    </source>
</evidence>
<evidence type="ECO:0000305" key="5"/>
<protein>
    <recommendedName>
        <fullName evidence="3">DNA polymerase II large subunit</fullName>
        <shortName evidence="3">Pol II</shortName>
        <ecNumber evidence="3">2.7.7.7</ecNumber>
    </recommendedName>
    <alternativeName>
        <fullName evidence="3">Exodeoxyribonuclease large subunit</fullName>
        <ecNumber evidence="3">3.1.11.1</ecNumber>
    </alternativeName>
    <component>
        <recommendedName>
            <fullName>Hma polC intein</fullName>
        </recommendedName>
        <alternativeName>
            <fullName>Hma pol II intein</fullName>
        </alternativeName>
    </component>
</protein>
<accession>Q5UZ40</accession>
<organism>
    <name type="scientific">Haloarcula marismortui (strain ATCC 43049 / DSM 3752 / JCM 8966 / VKM B-1809)</name>
    <name type="common">Halobacterium marismortui</name>
    <dbReference type="NCBI Taxonomy" id="272569"/>
    <lineage>
        <taxon>Archaea</taxon>
        <taxon>Methanobacteriati</taxon>
        <taxon>Methanobacteriota</taxon>
        <taxon>Stenosarchaea group</taxon>
        <taxon>Halobacteria</taxon>
        <taxon>Halobacteriales</taxon>
        <taxon>Haloarculaceae</taxon>
        <taxon>Haloarcula</taxon>
    </lineage>
</organism>
<gene>
    <name evidence="3" type="primary">polC</name>
    <name type="synonym">polA2</name>
    <name type="ordered locus">rrnAC2691</name>
</gene>
<proteinExistence type="inferred from homology"/>
<reference key="1">
    <citation type="journal article" date="2004" name="Genome Res.">
        <title>Genome sequence of Haloarcula marismortui: a halophilic archaeon from the Dead Sea.</title>
        <authorList>
            <person name="Baliga N.S."/>
            <person name="Bonneau R."/>
            <person name="Facciotti M.T."/>
            <person name="Pan M."/>
            <person name="Glusman G."/>
            <person name="Deutsch E.W."/>
            <person name="Shannon P."/>
            <person name="Chiu Y."/>
            <person name="Weng R.S."/>
            <person name="Gan R.R."/>
            <person name="Hung P."/>
            <person name="Date S.V."/>
            <person name="Marcotte E."/>
            <person name="Hood L."/>
            <person name="Ng W.V."/>
        </authorList>
    </citation>
    <scope>NUCLEOTIDE SEQUENCE [LARGE SCALE GENOMIC DNA]</scope>
    <source>
        <strain>ATCC 43049 / DSM 3752 / JCM 8966 / VKM B-1809</strain>
    </source>
</reference>
<name>DP2L_HALMA</name>
<sequence>MREADEQYFETLETQLEAAFDVAERAKERGGDPKPEVEIPTARDMADRVENILGIDGVAERVRELEGQMSREEAALELVEDFVEGTVGDYDSREGKVEGAVRTAVALLTEGVVAAPIEGIDRVELLENDDGTEFINVYYAGPIRSAGGTAQALSVLVADYARALLGIDQYKAREEEIGRYAEEIDLYDKDTGLQYSPKEKETKFIAEHMPIMLDGEATGDEEVSGYRDLERVDSNSPRGGMCLVLAEGIALKAPKIQRYTRNLDEVDWPWLQDLIDGTIGKDEADEGDSAEDANGDDAGEGADDDGGDEADEQAGPPRVEPADKYLRDLIAGRPVFSHPSKSGGFRLRYGRSRNHGFATAGVHPATMHLVDDFLATGTQIKTERPGKAAGVVPVDTIEGPTVRLANGDVRRIDDAEEALAVRNGVEKILDLGEYLVNYGEFVENNHPLAPASYTVEWWEQDLAAAGADVQAMQDSPHIDLADPSAEEAIEWATEYDAPLHPKYTYLWHDVSIEQVCALADAVEDAQVAQADGAYADPEMDGTAGDAHSDDGALVLPRSDAVQQTLEHLLIGHTQDEETITVTDWVPLVRTLGFSRSLERDWTREDLSEHARTYGESESLDAIGVAEDAEREDGQNAIKAINEVAPFQVRERAPTRIGNRMGRPEKSERRDLSPAVHTLSPIGEAGGAQRDVAKATKHADDMSDTPGQVEVEVARRRCPDCGTETHQANCAECSGTTEPVYVCPDCEAEVERDESGRAECGRCETLASPTQYKVLDLQEAYRDALQNVGERETAFEQLKAVKGLTSEEKVPEPMEKGILRAKHDVSAFKDGTVRYDMTDLPVTAVRASELDVSAERLRGLGYTEDIHGDPLTHEDQLVELKVQDIVLSDGAAEHMLQTARFVDDLLEQYYGLERFYEFDDREDLVGELVFGMAPHTSAATVGRVVGFTSAAVGYAHPYFHAAKRRNCFHPDTRLWYEDENDDWEYGTIEELVESRLDDPQEDDFGTLVQELDGDLTVSSLGENGPCRQPVDAVSKHPAPDHLVEVAVGDRTLRVTPDHTMLRAGPDGIEEVPASDLAAGDDLPAYDGGETTTMTARGEASTAATDGAAPTDTVEAVEYVESDVDHVYCLTVADTHRVAVEGTYVGQCDGDEDCVMLLMDGLLNFSKSYLPNQRGGQMDAPLVMSSRIDPSEIDDEAHNMDIMDAYPREFYEATREMKDPTEVEDVMKIAEETLGTDREYTEFRHTHDTANIAAGPDLSAYKTLGSMEDKMDAQLEISRKLRAVVESDVAERIIEYHFLPDLIGNLRAFSRQEVRCLDCGESFRRAPLTGDCRECGGRVNLTVHEGSVNKYIDTAIRVADEFGARDYTKQRLKILERKIESVFENDHNKQSGIADFM</sequence>